<protein>
    <recommendedName>
        <fullName evidence="1">ATP synthase subunit alpha</fullName>
        <ecNumber evidence="1">7.1.2.2</ecNumber>
    </recommendedName>
    <alternativeName>
        <fullName evidence="1">ATP synthase F1 sector subunit alpha</fullName>
    </alternativeName>
    <alternativeName>
        <fullName evidence="1">F-ATPase subunit alpha</fullName>
    </alternativeName>
</protein>
<comment type="function">
    <text evidence="1">Produces ATP from ADP in the presence of a proton gradient across the membrane. The alpha chain is a regulatory subunit.</text>
</comment>
<comment type="catalytic activity">
    <reaction evidence="1">
        <text>ATP + H2O + 4 H(+)(in) = ADP + phosphate + 5 H(+)(out)</text>
        <dbReference type="Rhea" id="RHEA:57720"/>
        <dbReference type="ChEBI" id="CHEBI:15377"/>
        <dbReference type="ChEBI" id="CHEBI:15378"/>
        <dbReference type="ChEBI" id="CHEBI:30616"/>
        <dbReference type="ChEBI" id="CHEBI:43474"/>
        <dbReference type="ChEBI" id="CHEBI:456216"/>
        <dbReference type="EC" id="7.1.2.2"/>
    </reaction>
</comment>
<comment type="subunit">
    <text evidence="1">F-type ATPases have 2 components, CF(1) - the catalytic core - and CF(0) - the membrane proton channel. CF(1) has five subunits: alpha(3), beta(3), gamma(1), delta(1), epsilon(1). CF(0) has three main subunits: a(1), b(2) and c(9-12). The alpha and beta chains form an alternating ring which encloses part of the gamma chain. CF(1) is attached to CF(0) by a central stalk formed by the gamma and epsilon chains, while a peripheral stalk is formed by the delta and b chains.</text>
</comment>
<comment type="subcellular location">
    <subcellularLocation>
        <location evidence="1">Cell membrane</location>
        <topology evidence="1">Peripheral membrane protein</topology>
    </subcellularLocation>
</comment>
<comment type="similarity">
    <text evidence="1">Belongs to the ATPase alpha/beta chains family.</text>
</comment>
<accession>P95787</accession>
<reference key="1">
    <citation type="journal article" date="1996" name="Gene">
        <title>Cloning and nucleotide sequence analysis of the Streptococcus mutans membrane-bound, proton-translocating ATPase operon.</title>
        <authorList>
            <person name="Smith A.J."/>
            <person name="Quivey R.G."/>
            <person name="Faustoferri R.C."/>
        </authorList>
    </citation>
    <scope>NUCLEOTIDE SEQUENCE [GENOMIC DNA]</scope>
    <source>
        <strain>GS-5</strain>
    </source>
</reference>
<reference key="2">
    <citation type="journal article" date="2002" name="Proc. Natl. Acad. Sci. U.S.A.">
        <title>Genome sequence of Streptococcus mutans UA159, a cariogenic dental pathogen.</title>
        <authorList>
            <person name="Ajdic D.J."/>
            <person name="McShan W.M."/>
            <person name="McLaughlin R.E."/>
            <person name="Savic G."/>
            <person name="Chang J."/>
            <person name="Carson M.B."/>
            <person name="Primeaux C."/>
            <person name="Tian R."/>
            <person name="Kenton S."/>
            <person name="Jia H.G."/>
            <person name="Lin S.P."/>
            <person name="Qian Y."/>
            <person name="Li S."/>
            <person name="Zhu H."/>
            <person name="Najar F.Z."/>
            <person name="Lai H."/>
            <person name="White J."/>
            <person name="Roe B.A."/>
            <person name="Ferretti J.J."/>
        </authorList>
    </citation>
    <scope>NUCLEOTIDE SEQUENCE [LARGE SCALE GENOMIC DNA]</scope>
    <source>
        <strain>ATCC 700610 / UA159</strain>
    </source>
</reference>
<sequence length="501" mass="54373">MAINAQEISALIKKQIENFQPNFDVTETGVVTYIGDGIARACGLDNAMSGELLEFDNGTFGMAQNLESSDIGIIILGDFNSIREGDTVKRTGKIMEVPVGQSLIGRVVNPLGQPVDGLGEIETTATRPVEAAAPGVMQRQSVSEPLQTGIKAIDALVPIGRGQRELVIGDRQTGKTSIAIDAIINQKGQDMICIYVAIGQKESTVRSQVEVLRKYGALDYTIVVTASASQPSPLLYIAPYAGVAMAEEFMYNGKHALIVYDDLSKQAVAYRELSLLLRRPPGREAYPGDVFYLHSRLLERSAKLSDELGGGSITALPFIETQAGDISAYIATNVISITDGQIFLQENLFNSGIRPAIDAGSSVSRVGGSAQIKAMKKVAGTLRLDLASYRELEAFTQFGSDLDSATQAKLNRGRRTVEVLKQGLHKPLAVEKQVLILYALTHGFLDSVPVDDILTFQDDMFDYIDSHDADIFETIRTTKDLPEEAVLDKAIQTFKDQSQFS</sequence>
<keyword id="KW-0066">ATP synthesis</keyword>
<keyword id="KW-0067">ATP-binding</keyword>
<keyword id="KW-1003">Cell membrane</keyword>
<keyword id="KW-0139">CF(1)</keyword>
<keyword id="KW-0375">Hydrogen ion transport</keyword>
<keyword id="KW-0406">Ion transport</keyword>
<keyword id="KW-0472">Membrane</keyword>
<keyword id="KW-0547">Nucleotide-binding</keyword>
<keyword id="KW-1185">Reference proteome</keyword>
<keyword id="KW-1278">Translocase</keyword>
<keyword id="KW-0813">Transport</keyword>
<feature type="chain" id="PRO_0000144359" description="ATP synthase subunit alpha">
    <location>
        <begin position="1"/>
        <end position="501"/>
    </location>
</feature>
<feature type="binding site" evidence="1">
    <location>
        <begin position="169"/>
        <end position="176"/>
    </location>
    <ligand>
        <name>ATP</name>
        <dbReference type="ChEBI" id="CHEBI:30616"/>
    </ligand>
</feature>
<feature type="site" description="Required for activity" evidence="1">
    <location>
        <position position="362"/>
    </location>
</feature>
<proteinExistence type="inferred from homology"/>
<organism>
    <name type="scientific">Streptococcus mutans serotype c (strain ATCC 700610 / UA159)</name>
    <dbReference type="NCBI Taxonomy" id="210007"/>
    <lineage>
        <taxon>Bacteria</taxon>
        <taxon>Bacillati</taxon>
        <taxon>Bacillota</taxon>
        <taxon>Bacilli</taxon>
        <taxon>Lactobacillales</taxon>
        <taxon>Streptococcaceae</taxon>
        <taxon>Streptococcus</taxon>
    </lineage>
</organism>
<name>ATPA_STRMU</name>
<evidence type="ECO:0000255" key="1">
    <source>
        <dbReference type="HAMAP-Rule" id="MF_01346"/>
    </source>
</evidence>
<dbReference type="EC" id="7.1.2.2" evidence="1"/>
<dbReference type="EMBL" id="U31170">
    <property type="protein sequence ID" value="AAD13381.1"/>
    <property type="molecule type" value="Genomic_DNA"/>
</dbReference>
<dbReference type="EMBL" id="AE014133">
    <property type="protein sequence ID" value="AAN59180.1"/>
    <property type="molecule type" value="Genomic_DNA"/>
</dbReference>
<dbReference type="PIR" id="JC5739">
    <property type="entry name" value="JC5739"/>
</dbReference>
<dbReference type="RefSeq" id="NP_721874.1">
    <property type="nucleotide sequence ID" value="NC_004350.2"/>
</dbReference>
<dbReference type="RefSeq" id="WP_002262942.1">
    <property type="nucleotide sequence ID" value="NC_004350.2"/>
</dbReference>
<dbReference type="SMR" id="P95787"/>
<dbReference type="STRING" id="210007.SMU_1530"/>
<dbReference type="KEGG" id="smu:SMU_1530"/>
<dbReference type="PATRIC" id="fig|210007.7.peg.1362"/>
<dbReference type="eggNOG" id="COG0056">
    <property type="taxonomic scope" value="Bacteria"/>
</dbReference>
<dbReference type="HOGENOM" id="CLU_010091_2_1_9"/>
<dbReference type="OrthoDB" id="9803053at2"/>
<dbReference type="PhylomeDB" id="P95787"/>
<dbReference type="SABIO-RK" id="P95787"/>
<dbReference type="Proteomes" id="UP000002512">
    <property type="component" value="Chromosome"/>
</dbReference>
<dbReference type="GO" id="GO:0005886">
    <property type="term" value="C:plasma membrane"/>
    <property type="evidence" value="ECO:0007669"/>
    <property type="project" value="UniProtKB-SubCell"/>
</dbReference>
<dbReference type="GO" id="GO:0045259">
    <property type="term" value="C:proton-transporting ATP synthase complex"/>
    <property type="evidence" value="ECO:0007669"/>
    <property type="project" value="UniProtKB-KW"/>
</dbReference>
<dbReference type="GO" id="GO:0043531">
    <property type="term" value="F:ADP binding"/>
    <property type="evidence" value="ECO:0007669"/>
    <property type="project" value="TreeGrafter"/>
</dbReference>
<dbReference type="GO" id="GO:0005524">
    <property type="term" value="F:ATP binding"/>
    <property type="evidence" value="ECO:0007669"/>
    <property type="project" value="UniProtKB-UniRule"/>
</dbReference>
<dbReference type="GO" id="GO:0046933">
    <property type="term" value="F:proton-transporting ATP synthase activity, rotational mechanism"/>
    <property type="evidence" value="ECO:0007669"/>
    <property type="project" value="UniProtKB-UniRule"/>
</dbReference>
<dbReference type="CDD" id="cd18113">
    <property type="entry name" value="ATP-synt_F1_alpha_C"/>
    <property type="match status" value="1"/>
</dbReference>
<dbReference type="CDD" id="cd18116">
    <property type="entry name" value="ATP-synt_F1_alpha_N"/>
    <property type="match status" value="1"/>
</dbReference>
<dbReference type="CDD" id="cd01132">
    <property type="entry name" value="F1-ATPase_alpha_CD"/>
    <property type="match status" value="1"/>
</dbReference>
<dbReference type="FunFam" id="1.20.150.20:FF:000001">
    <property type="entry name" value="ATP synthase subunit alpha"/>
    <property type="match status" value="1"/>
</dbReference>
<dbReference type="FunFam" id="2.40.30.20:FF:000001">
    <property type="entry name" value="ATP synthase subunit alpha"/>
    <property type="match status" value="1"/>
</dbReference>
<dbReference type="FunFam" id="3.40.50.300:FF:000002">
    <property type="entry name" value="ATP synthase subunit alpha"/>
    <property type="match status" value="1"/>
</dbReference>
<dbReference type="Gene3D" id="2.40.30.20">
    <property type="match status" value="1"/>
</dbReference>
<dbReference type="Gene3D" id="1.20.150.20">
    <property type="entry name" value="ATP synthase alpha/beta chain, C-terminal domain"/>
    <property type="match status" value="1"/>
</dbReference>
<dbReference type="Gene3D" id="3.40.50.300">
    <property type="entry name" value="P-loop containing nucleotide triphosphate hydrolases"/>
    <property type="match status" value="1"/>
</dbReference>
<dbReference type="HAMAP" id="MF_01346">
    <property type="entry name" value="ATP_synth_alpha_bact"/>
    <property type="match status" value="1"/>
</dbReference>
<dbReference type="InterPro" id="IPR023366">
    <property type="entry name" value="ATP_synth_asu-like_sf"/>
</dbReference>
<dbReference type="InterPro" id="IPR000793">
    <property type="entry name" value="ATP_synth_asu_C"/>
</dbReference>
<dbReference type="InterPro" id="IPR038376">
    <property type="entry name" value="ATP_synth_asu_C_sf"/>
</dbReference>
<dbReference type="InterPro" id="IPR033732">
    <property type="entry name" value="ATP_synth_F1_a_nt-bd_dom"/>
</dbReference>
<dbReference type="InterPro" id="IPR005294">
    <property type="entry name" value="ATP_synth_F1_asu"/>
</dbReference>
<dbReference type="InterPro" id="IPR004100">
    <property type="entry name" value="ATPase_F1/V1/A1_a/bsu_N"/>
</dbReference>
<dbReference type="InterPro" id="IPR036121">
    <property type="entry name" value="ATPase_F1/V1/A1_a/bsu_N_sf"/>
</dbReference>
<dbReference type="InterPro" id="IPR000194">
    <property type="entry name" value="ATPase_F1/V1/A1_a/bsu_nucl-bd"/>
</dbReference>
<dbReference type="InterPro" id="IPR027417">
    <property type="entry name" value="P-loop_NTPase"/>
</dbReference>
<dbReference type="NCBIfam" id="TIGR00962">
    <property type="entry name" value="atpA"/>
    <property type="match status" value="1"/>
</dbReference>
<dbReference type="NCBIfam" id="NF009884">
    <property type="entry name" value="PRK13343.1"/>
    <property type="match status" value="1"/>
</dbReference>
<dbReference type="PANTHER" id="PTHR48082">
    <property type="entry name" value="ATP SYNTHASE SUBUNIT ALPHA, MITOCHONDRIAL"/>
    <property type="match status" value="1"/>
</dbReference>
<dbReference type="PANTHER" id="PTHR48082:SF2">
    <property type="entry name" value="ATP SYNTHASE SUBUNIT ALPHA, MITOCHONDRIAL"/>
    <property type="match status" value="1"/>
</dbReference>
<dbReference type="Pfam" id="PF00006">
    <property type="entry name" value="ATP-synt_ab"/>
    <property type="match status" value="1"/>
</dbReference>
<dbReference type="Pfam" id="PF00306">
    <property type="entry name" value="ATP-synt_ab_C"/>
    <property type="match status" value="1"/>
</dbReference>
<dbReference type="Pfam" id="PF02874">
    <property type="entry name" value="ATP-synt_ab_N"/>
    <property type="match status" value="1"/>
</dbReference>
<dbReference type="PIRSF" id="PIRSF039088">
    <property type="entry name" value="F_ATPase_subunit_alpha"/>
    <property type="match status" value="1"/>
</dbReference>
<dbReference type="SUPFAM" id="SSF47917">
    <property type="entry name" value="C-terminal domain of alpha and beta subunits of F1 ATP synthase"/>
    <property type="match status" value="1"/>
</dbReference>
<dbReference type="SUPFAM" id="SSF50615">
    <property type="entry name" value="N-terminal domain of alpha and beta subunits of F1 ATP synthase"/>
    <property type="match status" value="1"/>
</dbReference>
<dbReference type="SUPFAM" id="SSF52540">
    <property type="entry name" value="P-loop containing nucleoside triphosphate hydrolases"/>
    <property type="match status" value="1"/>
</dbReference>
<gene>
    <name evidence="1" type="primary">atpA</name>
    <name type="ordered locus">SMU_1530</name>
</gene>